<accession>A4YJF2</accession>
<protein>
    <recommendedName>
        <fullName evidence="1">Small ribosomal subunit protein uS15</fullName>
    </recommendedName>
    <alternativeName>
        <fullName evidence="2">30S ribosomal protein S15</fullName>
    </alternativeName>
</protein>
<name>RS15_BRASO</name>
<comment type="function">
    <text evidence="1">One of the primary rRNA binding proteins, it binds directly to 16S rRNA where it helps nucleate assembly of the platform of the 30S subunit by binding and bridging several RNA helices of the 16S rRNA.</text>
</comment>
<comment type="function">
    <text evidence="1">Forms an intersubunit bridge (bridge B4) with the 23S rRNA of the 50S subunit in the ribosome.</text>
</comment>
<comment type="subunit">
    <text evidence="1">Part of the 30S ribosomal subunit. Forms a bridge to the 50S subunit in the 70S ribosome, contacting the 23S rRNA.</text>
</comment>
<comment type="similarity">
    <text evidence="1">Belongs to the universal ribosomal protein uS15 family.</text>
</comment>
<sequence length="89" mass="10095">MSITAERKAEIIKANATKAGDTGSPEVQVAILSERINNLTGHFKTHGKDNHSRRGLLKLVSTRRSLLDYLKKNDEARYKALLEKHNIRR</sequence>
<keyword id="KW-1185">Reference proteome</keyword>
<keyword id="KW-0687">Ribonucleoprotein</keyword>
<keyword id="KW-0689">Ribosomal protein</keyword>
<keyword id="KW-0694">RNA-binding</keyword>
<keyword id="KW-0699">rRNA-binding</keyword>
<evidence type="ECO:0000255" key="1">
    <source>
        <dbReference type="HAMAP-Rule" id="MF_01343"/>
    </source>
</evidence>
<evidence type="ECO:0000305" key="2"/>
<dbReference type="EMBL" id="CU234118">
    <property type="protein sequence ID" value="CAL74028.1"/>
    <property type="molecule type" value="Genomic_DNA"/>
</dbReference>
<dbReference type="RefSeq" id="WP_011923330.1">
    <property type="nucleotide sequence ID" value="NC_009445.1"/>
</dbReference>
<dbReference type="SMR" id="A4YJF2"/>
<dbReference type="STRING" id="114615.BRADO0056"/>
<dbReference type="KEGG" id="bra:BRADO0056"/>
<dbReference type="eggNOG" id="COG0184">
    <property type="taxonomic scope" value="Bacteria"/>
</dbReference>
<dbReference type="HOGENOM" id="CLU_148518_0_0_5"/>
<dbReference type="OrthoDB" id="9799262at2"/>
<dbReference type="Proteomes" id="UP000001994">
    <property type="component" value="Chromosome"/>
</dbReference>
<dbReference type="GO" id="GO:0022627">
    <property type="term" value="C:cytosolic small ribosomal subunit"/>
    <property type="evidence" value="ECO:0007669"/>
    <property type="project" value="TreeGrafter"/>
</dbReference>
<dbReference type="GO" id="GO:0019843">
    <property type="term" value="F:rRNA binding"/>
    <property type="evidence" value="ECO:0007669"/>
    <property type="project" value="UniProtKB-UniRule"/>
</dbReference>
<dbReference type="GO" id="GO:0003735">
    <property type="term" value="F:structural constituent of ribosome"/>
    <property type="evidence" value="ECO:0007669"/>
    <property type="project" value="InterPro"/>
</dbReference>
<dbReference type="GO" id="GO:0006412">
    <property type="term" value="P:translation"/>
    <property type="evidence" value="ECO:0007669"/>
    <property type="project" value="UniProtKB-UniRule"/>
</dbReference>
<dbReference type="CDD" id="cd00353">
    <property type="entry name" value="Ribosomal_S15p_S13e"/>
    <property type="match status" value="1"/>
</dbReference>
<dbReference type="FunFam" id="1.10.287.10:FF:000002">
    <property type="entry name" value="30S ribosomal protein S15"/>
    <property type="match status" value="1"/>
</dbReference>
<dbReference type="Gene3D" id="6.10.250.3130">
    <property type="match status" value="1"/>
</dbReference>
<dbReference type="Gene3D" id="1.10.287.10">
    <property type="entry name" value="S15/NS1, RNA-binding"/>
    <property type="match status" value="1"/>
</dbReference>
<dbReference type="HAMAP" id="MF_01343_B">
    <property type="entry name" value="Ribosomal_uS15_B"/>
    <property type="match status" value="1"/>
</dbReference>
<dbReference type="InterPro" id="IPR000589">
    <property type="entry name" value="Ribosomal_uS15"/>
</dbReference>
<dbReference type="InterPro" id="IPR005290">
    <property type="entry name" value="Ribosomal_uS15_bac-type"/>
</dbReference>
<dbReference type="InterPro" id="IPR009068">
    <property type="entry name" value="uS15_NS1_RNA-bd_sf"/>
</dbReference>
<dbReference type="NCBIfam" id="TIGR00952">
    <property type="entry name" value="S15_bact"/>
    <property type="match status" value="1"/>
</dbReference>
<dbReference type="PANTHER" id="PTHR23321">
    <property type="entry name" value="RIBOSOMAL PROTEIN S15, BACTERIAL AND ORGANELLAR"/>
    <property type="match status" value="1"/>
</dbReference>
<dbReference type="PANTHER" id="PTHR23321:SF26">
    <property type="entry name" value="SMALL RIBOSOMAL SUBUNIT PROTEIN US15M"/>
    <property type="match status" value="1"/>
</dbReference>
<dbReference type="Pfam" id="PF00312">
    <property type="entry name" value="Ribosomal_S15"/>
    <property type="match status" value="1"/>
</dbReference>
<dbReference type="SMART" id="SM01387">
    <property type="entry name" value="Ribosomal_S15"/>
    <property type="match status" value="1"/>
</dbReference>
<dbReference type="SUPFAM" id="SSF47060">
    <property type="entry name" value="S15/NS1 RNA-binding domain"/>
    <property type="match status" value="1"/>
</dbReference>
<dbReference type="PROSITE" id="PS00362">
    <property type="entry name" value="RIBOSOMAL_S15"/>
    <property type="match status" value="1"/>
</dbReference>
<proteinExistence type="inferred from homology"/>
<feature type="chain" id="PRO_1000054756" description="Small ribosomal subunit protein uS15">
    <location>
        <begin position="1"/>
        <end position="89"/>
    </location>
</feature>
<gene>
    <name evidence="1" type="primary">rpsO</name>
    <name type="ordered locus">BRADO0056</name>
</gene>
<reference key="1">
    <citation type="journal article" date="2007" name="Science">
        <title>Legumes symbioses: absence of nod genes in photosynthetic bradyrhizobia.</title>
        <authorList>
            <person name="Giraud E."/>
            <person name="Moulin L."/>
            <person name="Vallenet D."/>
            <person name="Barbe V."/>
            <person name="Cytryn E."/>
            <person name="Avarre J.-C."/>
            <person name="Jaubert M."/>
            <person name="Simon D."/>
            <person name="Cartieaux F."/>
            <person name="Prin Y."/>
            <person name="Bena G."/>
            <person name="Hannibal L."/>
            <person name="Fardoux J."/>
            <person name="Kojadinovic M."/>
            <person name="Vuillet L."/>
            <person name="Lajus A."/>
            <person name="Cruveiller S."/>
            <person name="Rouy Z."/>
            <person name="Mangenot S."/>
            <person name="Segurens B."/>
            <person name="Dossat C."/>
            <person name="Franck W.L."/>
            <person name="Chang W.-S."/>
            <person name="Saunders E."/>
            <person name="Bruce D."/>
            <person name="Richardson P."/>
            <person name="Normand P."/>
            <person name="Dreyfus B."/>
            <person name="Pignol D."/>
            <person name="Stacey G."/>
            <person name="Emerich D."/>
            <person name="Vermeglio A."/>
            <person name="Medigue C."/>
            <person name="Sadowsky M."/>
        </authorList>
    </citation>
    <scope>NUCLEOTIDE SEQUENCE [LARGE SCALE GENOMIC DNA]</scope>
    <source>
        <strain>ORS 278</strain>
    </source>
</reference>
<organism>
    <name type="scientific">Bradyrhizobium sp. (strain ORS 278)</name>
    <dbReference type="NCBI Taxonomy" id="114615"/>
    <lineage>
        <taxon>Bacteria</taxon>
        <taxon>Pseudomonadati</taxon>
        <taxon>Pseudomonadota</taxon>
        <taxon>Alphaproteobacteria</taxon>
        <taxon>Hyphomicrobiales</taxon>
        <taxon>Nitrobacteraceae</taxon>
        <taxon>Bradyrhizobium</taxon>
    </lineage>
</organism>